<keyword id="KW-0066">ATP synthesis</keyword>
<keyword id="KW-0997">Cell inner membrane</keyword>
<keyword id="KW-1003">Cell membrane</keyword>
<keyword id="KW-0138">CF(0)</keyword>
<keyword id="KW-0375">Hydrogen ion transport</keyword>
<keyword id="KW-0406">Ion transport</keyword>
<keyword id="KW-0446">Lipid-binding</keyword>
<keyword id="KW-0472">Membrane</keyword>
<keyword id="KW-0812">Transmembrane</keyword>
<keyword id="KW-1133">Transmembrane helix</keyword>
<keyword id="KW-0813">Transport</keyword>
<dbReference type="EMBL" id="CP000139">
    <property type="protein sequence ID" value="ABR40635.1"/>
    <property type="molecule type" value="Genomic_DNA"/>
</dbReference>
<dbReference type="RefSeq" id="WP_005846828.1">
    <property type="nucleotide sequence ID" value="NZ_JANSWM010000059.1"/>
</dbReference>
<dbReference type="SMR" id="A6L4M1"/>
<dbReference type="STRING" id="435590.BVU_2997"/>
<dbReference type="PaxDb" id="435590-BVU_2997"/>
<dbReference type="GeneID" id="93446872"/>
<dbReference type="KEGG" id="bvu:BVU_2997"/>
<dbReference type="eggNOG" id="COG0636">
    <property type="taxonomic scope" value="Bacteria"/>
</dbReference>
<dbReference type="HOGENOM" id="CLU_148047_5_1_10"/>
<dbReference type="BioCyc" id="BVUL435590:G1G59-3120-MONOMER"/>
<dbReference type="Proteomes" id="UP000002861">
    <property type="component" value="Chromosome"/>
</dbReference>
<dbReference type="GO" id="GO:0005886">
    <property type="term" value="C:plasma membrane"/>
    <property type="evidence" value="ECO:0007669"/>
    <property type="project" value="UniProtKB-SubCell"/>
</dbReference>
<dbReference type="GO" id="GO:0045259">
    <property type="term" value="C:proton-transporting ATP synthase complex"/>
    <property type="evidence" value="ECO:0007669"/>
    <property type="project" value="UniProtKB-KW"/>
</dbReference>
<dbReference type="GO" id="GO:0033177">
    <property type="term" value="C:proton-transporting two-sector ATPase complex, proton-transporting domain"/>
    <property type="evidence" value="ECO:0007669"/>
    <property type="project" value="InterPro"/>
</dbReference>
<dbReference type="GO" id="GO:0008289">
    <property type="term" value="F:lipid binding"/>
    <property type="evidence" value="ECO:0007669"/>
    <property type="project" value="UniProtKB-KW"/>
</dbReference>
<dbReference type="GO" id="GO:0046933">
    <property type="term" value="F:proton-transporting ATP synthase activity, rotational mechanism"/>
    <property type="evidence" value="ECO:0007669"/>
    <property type="project" value="UniProtKB-UniRule"/>
</dbReference>
<dbReference type="CDD" id="cd18121">
    <property type="entry name" value="ATP-synt_Fo_c"/>
    <property type="match status" value="1"/>
</dbReference>
<dbReference type="FunFam" id="1.20.20.10:FF:000004">
    <property type="entry name" value="ATP synthase subunit c"/>
    <property type="match status" value="1"/>
</dbReference>
<dbReference type="Gene3D" id="1.20.20.10">
    <property type="entry name" value="F1F0 ATP synthase subunit C"/>
    <property type="match status" value="1"/>
</dbReference>
<dbReference type="HAMAP" id="MF_01396">
    <property type="entry name" value="ATP_synth_c_bact"/>
    <property type="match status" value="1"/>
</dbReference>
<dbReference type="InterPro" id="IPR005953">
    <property type="entry name" value="ATP_synth_csu_bac/chlpt"/>
</dbReference>
<dbReference type="InterPro" id="IPR000454">
    <property type="entry name" value="ATP_synth_F0_csu"/>
</dbReference>
<dbReference type="InterPro" id="IPR020537">
    <property type="entry name" value="ATP_synth_F0_csu_DDCD_BS"/>
</dbReference>
<dbReference type="InterPro" id="IPR038662">
    <property type="entry name" value="ATP_synth_F0_csu_sf"/>
</dbReference>
<dbReference type="InterPro" id="IPR002379">
    <property type="entry name" value="ATPase_proteolipid_c-like_dom"/>
</dbReference>
<dbReference type="InterPro" id="IPR035921">
    <property type="entry name" value="F/V-ATP_Csub_sf"/>
</dbReference>
<dbReference type="NCBIfam" id="TIGR01260">
    <property type="entry name" value="ATP_synt_c"/>
    <property type="match status" value="1"/>
</dbReference>
<dbReference type="Pfam" id="PF00137">
    <property type="entry name" value="ATP-synt_C"/>
    <property type="match status" value="1"/>
</dbReference>
<dbReference type="PRINTS" id="PR00124">
    <property type="entry name" value="ATPASEC"/>
</dbReference>
<dbReference type="SUPFAM" id="SSF81333">
    <property type="entry name" value="F1F0 ATP synthase subunit C"/>
    <property type="match status" value="1"/>
</dbReference>
<dbReference type="PROSITE" id="PS00605">
    <property type="entry name" value="ATPASE_C"/>
    <property type="match status" value="1"/>
</dbReference>
<sequence>MLLAVLLQSAAAAGLGKLGAALGAAIAVIGAGIGIGKIGGSAMEAIARQPEAAGDIRMNMIIIAALVEGVALIAIIVCLLTLFL</sequence>
<proteinExistence type="inferred from homology"/>
<comment type="function">
    <text evidence="1">F(1)F(0) ATP synthase produces ATP from ADP in the presence of a proton or sodium gradient. F-type ATPases consist of two structural domains, F(1) containing the extramembraneous catalytic core and F(0) containing the membrane proton channel, linked together by a central stalk and a peripheral stalk. During catalysis, ATP synthesis in the catalytic domain of F(1) is coupled via a rotary mechanism of the central stalk subunits to proton translocation.</text>
</comment>
<comment type="function">
    <text evidence="1">Key component of the F(0) channel; it plays a direct role in translocation across the membrane. A homomeric c-ring of between 10-14 subunits forms the central stalk rotor element with the F(1) delta and epsilon subunits.</text>
</comment>
<comment type="subunit">
    <text evidence="1">F-type ATPases have 2 components, F(1) - the catalytic core - and F(0) - the membrane proton channel. F(1) has five subunits: alpha(3), beta(3), gamma(1), delta(1), epsilon(1). F(0) has three main subunits: a(1), b(2) and c(10-14). The alpha and beta chains form an alternating ring which encloses part of the gamma chain. F(1) is attached to F(0) by a central stalk formed by the gamma and epsilon chains, while a peripheral stalk is formed by the delta and b chains.</text>
</comment>
<comment type="subcellular location">
    <subcellularLocation>
        <location evidence="1">Cell inner membrane</location>
        <topology evidence="1">Multi-pass membrane protein</topology>
    </subcellularLocation>
</comment>
<comment type="similarity">
    <text evidence="1">Belongs to the ATPase C chain family.</text>
</comment>
<organism>
    <name type="scientific">Phocaeicola vulgatus (strain ATCC 8482 / DSM 1447 / JCM 5826 / CCUG 4940 / NBRC 14291 / NCTC 11154)</name>
    <name type="common">Bacteroides vulgatus</name>
    <dbReference type="NCBI Taxonomy" id="435590"/>
    <lineage>
        <taxon>Bacteria</taxon>
        <taxon>Pseudomonadati</taxon>
        <taxon>Bacteroidota</taxon>
        <taxon>Bacteroidia</taxon>
        <taxon>Bacteroidales</taxon>
        <taxon>Bacteroidaceae</taxon>
        <taxon>Phocaeicola</taxon>
    </lineage>
</organism>
<feature type="chain" id="PRO_1000184334" description="ATP synthase subunit c">
    <location>
        <begin position="1"/>
        <end position="84"/>
    </location>
</feature>
<feature type="transmembrane region" description="Helical" evidence="1">
    <location>
        <begin position="21"/>
        <end position="38"/>
    </location>
</feature>
<feature type="transmembrane region" description="Helical" evidence="1">
    <location>
        <begin position="60"/>
        <end position="80"/>
    </location>
</feature>
<feature type="site" description="Reversibly protonated during proton transport" evidence="1">
    <location>
        <position position="68"/>
    </location>
</feature>
<name>ATPL_PHOV8</name>
<reference key="1">
    <citation type="journal article" date="2007" name="PLoS Biol.">
        <title>Evolution of symbiotic bacteria in the distal human intestine.</title>
        <authorList>
            <person name="Xu J."/>
            <person name="Mahowald M.A."/>
            <person name="Ley R.E."/>
            <person name="Lozupone C.A."/>
            <person name="Hamady M."/>
            <person name="Martens E.C."/>
            <person name="Henrissat B."/>
            <person name="Coutinho P.M."/>
            <person name="Minx P."/>
            <person name="Latreille P."/>
            <person name="Cordum H."/>
            <person name="Van Brunt A."/>
            <person name="Kim K."/>
            <person name="Fulton R.S."/>
            <person name="Fulton L.A."/>
            <person name="Clifton S.W."/>
            <person name="Wilson R.K."/>
            <person name="Knight R.D."/>
            <person name="Gordon J.I."/>
        </authorList>
    </citation>
    <scope>NUCLEOTIDE SEQUENCE [LARGE SCALE GENOMIC DNA]</scope>
    <source>
        <strain>ATCC 8482 / DSM 1447 / JCM 5826 / CCUG 4940 / NBRC 14291 / NCTC 11154</strain>
    </source>
</reference>
<protein>
    <recommendedName>
        <fullName evidence="1">ATP synthase subunit c</fullName>
    </recommendedName>
    <alternativeName>
        <fullName evidence="1">ATP synthase F(0) sector subunit c</fullName>
    </alternativeName>
    <alternativeName>
        <fullName evidence="1">F-type ATPase subunit c</fullName>
        <shortName evidence="1">F-ATPase subunit c</shortName>
    </alternativeName>
    <alternativeName>
        <fullName evidence="1">Lipid-binding protein</fullName>
    </alternativeName>
</protein>
<evidence type="ECO:0000255" key="1">
    <source>
        <dbReference type="HAMAP-Rule" id="MF_01396"/>
    </source>
</evidence>
<gene>
    <name evidence="1" type="primary">atpE</name>
    <name type="ordered locus">BVU_2997</name>
</gene>
<accession>A6L4M1</accession>